<dbReference type="EMBL" id="CU928160">
    <property type="protein sequence ID" value="CAQ99324.1"/>
    <property type="molecule type" value="Genomic_DNA"/>
</dbReference>
<dbReference type="RefSeq" id="WP_000966468.1">
    <property type="nucleotide sequence ID" value="NC_011741.1"/>
</dbReference>
<dbReference type="SMR" id="B7M6T6"/>
<dbReference type="KEGG" id="ecr:ECIAI1_2484"/>
<dbReference type="HOGENOM" id="CLU_055769_0_2_6"/>
<dbReference type="UniPathway" id="UPA00342"/>
<dbReference type="GO" id="GO:0097367">
    <property type="term" value="F:carbohydrate derivative binding"/>
    <property type="evidence" value="ECO:0007669"/>
    <property type="project" value="InterPro"/>
</dbReference>
<dbReference type="GO" id="GO:0003677">
    <property type="term" value="F:DNA binding"/>
    <property type="evidence" value="ECO:0007669"/>
    <property type="project" value="UniProtKB-KW"/>
</dbReference>
<dbReference type="GO" id="GO:0003700">
    <property type="term" value="F:DNA-binding transcription factor activity"/>
    <property type="evidence" value="ECO:0007669"/>
    <property type="project" value="UniProtKB-UniRule"/>
</dbReference>
<dbReference type="GO" id="GO:1901135">
    <property type="term" value="P:carbohydrate derivative metabolic process"/>
    <property type="evidence" value="ECO:0007669"/>
    <property type="project" value="InterPro"/>
</dbReference>
<dbReference type="GO" id="GO:0097173">
    <property type="term" value="P:N-acetylmuramic acid catabolic process"/>
    <property type="evidence" value="ECO:0007669"/>
    <property type="project" value="UniProtKB-UniPathway"/>
</dbReference>
<dbReference type="GO" id="GO:0045892">
    <property type="term" value="P:negative regulation of DNA-templated transcription"/>
    <property type="evidence" value="ECO:0007669"/>
    <property type="project" value="UniProtKB-UniRule"/>
</dbReference>
<dbReference type="GO" id="GO:0043470">
    <property type="term" value="P:regulation of carbohydrate catabolic process"/>
    <property type="evidence" value="ECO:0007669"/>
    <property type="project" value="UniProtKB-UniRule"/>
</dbReference>
<dbReference type="CDD" id="cd05013">
    <property type="entry name" value="SIS_RpiR"/>
    <property type="match status" value="1"/>
</dbReference>
<dbReference type="FunFam" id="3.40.50.10490:FF:000028">
    <property type="entry name" value="HTH-type transcriptional regulator MurR"/>
    <property type="match status" value="1"/>
</dbReference>
<dbReference type="Gene3D" id="3.40.50.10490">
    <property type="entry name" value="Glucose-6-phosphate isomerase like protein, domain 1"/>
    <property type="match status" value="1"/>
</dbReference>
<dbReference type="Gene3D" id="1.10.10.10">
    <property type="entry name" value="Winged helix-like DNA-binding domain superfamily/Winged helix DNA-binding domain"/>
    <property type="match status" value="1"/>
</dbReference>
<dbReference type="HAMAP" id="MF_02108">
    <property type="entry name" value="HTH_type_MurR"/>
    <property type="match status" value="1"/>
</dbReference>
<dbReference type="InterPro" id="IPR009057">
    <property type="entry name" value="Homeodomain-like_sf"/>
</dbReference>
<dbReference type="InterPro" id="IPR000281">
    <property type="entry name" value="HTH_RpiR"/>
</dbReference>
<dbReference type="InterPro" id="IPR047640">
    <property type="entry name" value="RpiR-like"/>
</dbReference>
<dbReference type="InterPro" id="IPR035472">
    <property type="entry name" value="RpiR-like_SIS"/>
</dbReference>
<dbReference type="InterPro" id="IPR001347">
    <property type="entry name" value="SIS_dom"/>
</dbReference>
<dbReference type="InterPro" id="IPR046348">
    <property type="entry name" value="SIS_dom_sf"/>
</dbReference>
<dbReference type="InterPro" id="IPR022821">
    <property type="entry name" value="Tscrpt_reg_HTH_MurR"/>
</dbReference>
<dbReference type="InterPro" id="IPR036388">
    <property type="entry name" value="WH-like_DNA-bd_sf"/>
</dbReference>
<dbReference type="NCBIfam" id="NF012026">
    <property type="entry name" value="PRK15482.1"/>
    <property type="match status" value="1"/>
</dbReference>
<dbReference type="PANTHER" id="PTHR30514">
    <property type="entry name" value="GLUCOKINASE"/>
    <property type="match status" value="1"/>
</dbReference>
<dbReference type="PANTHER" id="PTHR30514:SF17">
    <property type="entry name" value="HTH-TYPE TRANSCRIPTIONAL REGULATOR MURR"/>
    <property type="match status" value="1"/>
</dbReference>
<dbReference type="Pfam" id="PF01418">
    <property type="entry name" value="HTH_6"/>
    <property type="match status" value="1"/>
</dbReference>
<dbReference type="Pfam" id="PF01380">
    <property type="entry name" value="SIS"/>
    <property type="match status" value="1"/>
</dbReference>
<dbReference type="SUPFAM" id="SSF46689">
    <property type="entry name" value="Homeodomain-like"/>
    <property type="match status" value="1"/>
</dbReference>
<dbReference type="SUPFAM" id="SSF53697">
    <property type="entry name" value="SIS domain"/>
    <property type="match status" value="1"/>
</dbReference>
<dbReference type="PROSITE" id="PS51071">
    <property type="entry name" value="HTH_RPIR"/>
    <property type="match status" value="1"/>
</dbReference>
<dbReference type="PROSITE" id="PS51464">
    <property type="entry name" value="SIS"/>
    <property type="match status" value="1"/>
</dbReference>
<gene>
    <name evidence="1" type="primary">murR</name>
    <name type="ordered locus">ECIAI1_2484</name>
</gene>
<comment type="function">
    <text evidence="1">Represses the expression of the murPQ operon involved in the uptake and degradation of N-acetylmuramic acid (MurNAc). Binds to two adjacent inverted repeats within the operator region. MurNAc 6-phosphate, the substrate of MurQ, is the specific inducer that weakens binding of MurR to the operator.</text>
</comment>
<comment type="pathway">
    <text>Amino-sugar metabolism; N-acetylmuramate degradation [regulation].</text>
</comment>
<comment type="subunit">
    <text evidence="1">Homotetramer.</text>
</comment>
<keyword id="KW-0119">Carbohydrate metabolism</keyword>
<keyword id="KW-0238">DNA-binding</keyword>
<keyword id="KW-0678">Repressor</keyword>
<keyword id="KW-0804">Transcription</keyword>
<keyword id="KW-0805">Transcription regulation</keyword>
<accession>B7M6T6</accession>
<organism>
    <name type="scientific">Escherichia coli O8 (strain IAI1)</name>
    <dbReference type="NCBI Taxonomy" id="585034"/>
    <lineage>
        <taxon>Bacteria</taxon>
        <taxon>Pseudomonadati</taxon>
        <taxon>Pseudomonadota</taxon>
        <taxon>Gammaproteobacteria</taxon>
        <taxon>Enterobacterales</taxon>
        <taxon>Enterobacteriaceae</taxon>
        <taxon>Escherichia</taxon>
    </lineage>
</organism>
<name>MURR_ECO8A</name>
<reference key="1">
    <citation type="journal article" date="2009" name="PLoS Genet.">
        <title>Organised genome dynamics in the Escherichia coli species results in highly diverse adaptive paths.</title>
        <authorList>
            <person name="Touchon M."/>
            <person name="Hoede C."/>
            <person name="Tenaillon O."/>
            <person name="Barbe V."/>
            <person name="Baeriswyl S."/>
            <person name="Bidet P."/>
            <person name="Bingen E."/>
            <person name="Bonacorsi S."/>
            <person name="Bouchier C."/>
            <person name="Bouvet O."/>
            <person name="Calteau A."/>
            <person name="Chiapello H."/>
            <person name="Clermont O."/>
            <person name="Cruveiller S."/>
            <person name="Danchin A."/>
            <person name="Diard M."/>
            <person name="Dossat C."/>
            <person name="Karoui M.E."/>
            <person name="Frapy E."/>
            <person name="Garry L."/>
            <person name="Ghigo J.M."/>
            <person name="Gilles A.M."/>
            <person name="Johnson J."/>
            <person name="Le Bouguenec C."/>
            <person name="Lescat M."/>
            <person name="Mangenot S."/>
            <person name="Martinez-Jehanne V."/>
            <person name="Matic I."/>
            <person name="Nassif X."/>
            <person name="Oztas S."/>
            <person name="Petit M.A."/>
            <person name="Pichon C."/>
            <person name="Rouy Z."/>
            <person name="Ruf C.S."/>
            <person name="Schneider D."/>
            <person name="Tourret J."/>
            <person name="Vacherie B."/>
            <person name="Vallenet D."/>
            <person name="Medigue C."/>
            <person name="Rocha E.P.C."/>
            <person name="Denamur E."/>
        </authorList>
    </citation>
    <scope>NUCLEOTIDE SEQUENCE [LARGE SCALE GENOMIC DNA]</scope>
    <source>
        <strain>IAI1</strain>
    </source>
</reference>
<feature type="chain" id="PRO_0000387767" description="HTH-type transcriptional regulator MurR">
    <location>
        <begin position="1"/>
        <end position="285"/>
    </location>
</feature>
<feature type="domain" description="HTH rpiR-type" evidence="1">
    <location>
        <begin position="1"/>
        <end position="77"/>
    </location>
</feature>
<feature type="domain" description="SIS" evidence="1">
    <location>
        <begin position="128"/>
        <end position="268"/>
    </location>
</feature>
<feature type="DNA-binding region" description="H-T-H motif" evidence="1">
    <location>
        <begin position="37"/>
        <end position="56"/>
    </location>
</feature>
<evidence type="ECO:0000255" key="1">
    <source>
        <dbReference type="HAMAP-Rule" id="MF_02108"/>
    </source>
</evidence>
<proteinExistence type="inferred from homology"/>
<sequence length="285" mass="31196">MLYLTKISNAGSEFTENEQKIADFLQANVSELQSVSSRQMAKQLGISQSSIVKFAQKLGAQGFTELRMALIGEYSASREKTNATALHLHSSITSDDSLEVIARKLNREKELALEQTCALFDYARLQKIIEVISKAPFIQITGLGGSALVGRDLSFKLMKIGYRVACEADTHVQATVSQALKKGDVQIAISYSGSKKEIVLCAEAARKQGATVIAITSLADSPLRRLAHFTLDTVSGETEWRSSSMSTRTAQNSVTDLLFVGLVQLNDVESLKMIQRSSELTQRLK</sequence>
<protein>
    <recommendedName>
        <fullName evidence="1">HTH-type transcriptional regulator MurR</fullName>
    </recommendedName>
    <alternativeName>
        <fullName evidence="1">MurPQ operon repressor</fullName>
    </alternativeName>
</protein>